<feature type="chain" id="PRO_0000402335" description="Elongation factor Ts, mitochondrial">
    <location>
        <begin position="1"/>
        <end position="390"/>
    </location>
</feature>
<feature type="sequence conflict" description="In Ref. 1; AAF99480." evidence="2" ref="1">
    <original>R</original>
    <variation>S</variation>
    <location>
        <position position="370"/>
    </location>
</feature>
<sequence>MKLHTLVMFTLVIGSPLLPQHRCYRNSQTFQLVHTLNKFVGRRRRALKPTLHANPPSEHLQNLKYVREVTNASIQICNDALKECKGDVEKAIELVRRSAKNSSFVSTSVKVKTEGLVGSQVGGDQVVMLEVLTDSDFVARNEKFVRFVRTLLGAALAGGAAHGGAVTGEGSGATALLSLPYDEQSGGSHSGGPHIAHSTTTVGEQMNYLRNIFREDVRIGRFARYERKNANQFLHCYIHNRVEENIGTSGVLLVLTIDELSEKLKSQGECIAEVANDMALHILSAKPVSVSVSDLPEQVVKREVAIIRESLRGVKKPEGILDSMVNGKMRKFYSSVVLLEQEYMLDDTKRKVSQVIRDFCKKHNLNISVRHFDTFIVGEKNILREGPMGG</sequence>
<keyword id="KW-0251">Elongation factor</keyword>
<keyword id="KW-0496">Mitochondrion</keyword>
<keyword id="KW-0648">Protein biosynthesis</keyword>
<keyword id="KW-1185">Reference proteome</keyword>
<comment type="function">
    <text evidence="1">Associates with the EF-Tu.GDP complex and induces the exchange of GDP to GTP. It remains bound to the aminoacyl-tRNA.EF-Tu.GTP complex up to the GTP hydrolysis stage on the ribosome.</text>
</comment>
<comment type="subcellular location">
    <subcellularLocation>
        <location evidence="1">Mitochondrion</location>
    </subcellularLocation>
</comment>
<comment type="miscellaneous">
    <text evidence="1">This protein may be expected to contain an N-terminal transit peptide but none has been predicted.</text>
</comment>
<comment type="similarity">
    <text evidence="1">Belongs to the EF-Ts family.</text>
</comment>
<accession>A5KB67</accession>
<accession>Q962K0</accession>
<protein>
    <recommendedName>
        <fullName evidence="1">Elongation factor Ts, mitochondrial</fullName>
        <shortName evidence="1">EF-Ts</shortName>
        <shortName evidence="1">EF-TsMt</shortName>
    </recommendedName>
</protein>
<gene>
    <name type="ORF">PV1H14170c</name>
    <name type="ORF">PVX_119375</name>
</gene>
<reference key="1">
    <citation type="journal article" date="2001" name="Mol. Biochem. Parasitol.">
        <title>The sequence of a 200 kb portion of a Plasmodium vivax chromosome reveals a high degree of conservation with Plasmodium falciparum chromosome 3.</title>
        <authorList>
            <person name="Tchavtchitch M."/>
            <person name="Fischer K."/>
            <person name="Huestis R."/>
            <person name="Saul A."/>
        </authorList>
    </citation>
    <scope>NUCLEOTIDE SEQUENCE [LARGE SCALE GENOMIC DNA]</scope>
</reference>
<reference key="2">
    <citation type="journal article" date="2008" name="Nature">
        <title>Comparative genomics of the neglected human malaria parasite Plasmodium vivax.</title>
        <authorList>
            <person name="Carlton J.M."/>
            <person name="Adams J.H."/>
            <person name="Silva J.C."/>
            <person name="Bidwell S.L."/>
            <person name="Lorenzi H."/>
            <person name="Caler E."/>
            <person name="Crabtree J."/>
            <person name="Angiuoli S.V."/>
            <person name="Merino E.F."/>
            <person name="Amedeo P."/>
            <person name="Cheng Q."/>
            <person name="Coulson R.M.R."/>
            <person name="Crabb B.S."/>
            <person name="del Portillo H.A."/>
            <person name="Essien K."/>
            <person name="Feldblyum T.V."/>
            <person name="Fernandez-Becerra C."/>
            <person name="Gilson P.R."/>
            <person name="Gueye A.H."/>
            <person name="Guo X."/>
            <person name="Kang'a S."/>
            <person name="Kooij T.W.A."/>
            <person name="Korsinczky M."/>
            <person name="Meyer E.V.-S."/>
            <person name="Nene V."/>
            <person name="Paulsen I."/>
            <person name="White O."/>
            <person name="Ralph S.A."/>
            <person name="Ren Q."/>
            <person name="Sargeant T.J."/>
            <person name="Salzberg S.L."/>
            <person name="Stoeckert C.J."/>
            <person name="Sullivan S.A."/>
            <person name="Yamamoto M.M."/>
            <person name="Hoffman S.L."/>
            <person name="Wortman J.R."/>
            <person name="Gardner M.J."/>
            <person name="Galinski M.R."/>
            <person name="Barnwell J.W."/>
            <person name="Fraser-Liggett C.M."/>
        </authorList>
    </citation>
    <scope>NUCLEOTIDE SEQUENCE [LARGE SCALE GENOMIC DNA]</scope>
    <source>
        <strain>Salvador I</strain>
    </source>
</reference>
<proteinExistence type="inferred from homology"/>
<organism>
    <name type="scientific">Plasmodium vivax (strain Salvador I)</name>
    <dbReference type="NCBI Taxonomy" id="126793"/>
    <lineage>
        <taxon>Eukaryota</taxon>
        <taxon>Sar</taxon>
        <taxon>Alveolata</taxon>
        <taxon>Apicomplexa</taxon>
        <taxon>Aconoidasida</taxon>
        <taxon>Haemosporida</taxon>
        <taxon>Plasmodiidae</taxon>
        <taxon>Plasmodium</taxon>
        <taxon>Plasmodium (Plasmodium)</taxon>
    </lineage>
</organism>
<name>EFTS_PLAVS</name>
<dbReference type="EMBL" id="AY003872">
    <property type="protein sequence ID" value="AAF99480.1"/>
    <property type="molecule type" value="Genomic_DNA"/>
</dbReference>
<dbReference type="EMBL" id="AAKM01000017">
    <property type="protein sequence ID" value="EDL43345.1"/>
    <property type="molecule type" value="Genomic_DNA"/>
</dbReference>
<dbReference type="RefSeq" id="XP_001613072.1">
    <property type="nucleotide sequence ID" value="XM_001613022.1"/>
</dbReference>
<dbReference type="SMR" id="A5KB67"/>
<dbReference type="FunCoup" id="A5KB67">
    <property type="interactions" value="256"/>
</dbReference>
<dbReference type="STRING" id="126793.A5KB67"/>
<dbReference type="EnsemblProtists" id="EDL43345">
    <property type="protein sequence ID" value="EDL43345"/>
    <property type="gene ID" value="PVX_119375"/>
</dbReference>
<dbReference type="GeneID" id="5472326"/>
<dbReference type="KEGG" id="pvx:PVX_119375"/>
<dbReference type="VEuPathDB" id="PlasmoDB:PVX_119375"/>
<dbReference type="InParanoid" id="A5KB67"/>
<dbReference type="OMA" id="QEYMLDD"/>
<dbReference type="PhylomeDB" id="A5KB67"/>
<dbReference type="Proteomes" id="UP000008333">
    <property type="component" value="Chromosome 8"/>
</dbReference>
<dbReference type="GO" id="GO:0005739">
    <property type="term" value="C:mitochondrion"/>
    <property type="evidence" value="ECO:0007669"/>
    <property type="project" value="UniProtKB-SubCell"/>
</dbReference>
<dbReference type="GO" id="GO:0003746">
    <property type="term" value="F:translation elongation factor activity"/>
    <property type="evidence" value="ECO:0007669"/>
    <property type="project" value="UniProtKB-UniRule"/>
</dbReference>
<dbReference type="GO" id="GO:0070125">
    <property type="term" value="P:mitochondrial translational elongation"/>
    <property type="evidence" value="ECO:0007669"/>
    <property type="project" value="TreeGrafter"/>
</dbReference>
<dbReference type="Gene3D" id="1.10.286.20">
    <property type="match status" value="1"/>
</dbReference>
<dbReference type="Gene3D" id="1.10.8.10">
    <property type="entry name" value="DNA helicase RuvA subunit, C-terminal domain"/>
    <property type="match status" value="1"/>
</dbReference>
<dbReference type="Gene3D" id="3.30.479.20">
    <property type="entry name" value="Elongation factor Ts, dimerisation domain"/>
    <property type="match status" value="2"/>
</dbReference>
<dbReference type="HAMAP" id="MF_00050">
    <property type="entry name" value="EF_Ts"/>
    <property type="match status" value="1"/>
</dbReference>
<dbReference type="InterPro" id="IPR036402">
    <property type="entry name" value="EF-Ts_dimer_sf"/>
</dbReference>
<dbReference type="InterPro" id="IPR001816">
    <property type="entry name" value="Transl_elong_EFTs/EF1B"/>
</dbReference>
<dbReference type="InterPro" id="IPR014039">
    <property type="entry name" value="Transl_elong_EFTs/EF1B_dimer"/>
</dbReference>
<dbReference type="InterPro" id="IPR009060">
    <property type="entry name" value="UBA-like_sf"/>
</dbReference>
<dbReference type="PANTHER" id="PTHR11741">
    <property type="entry name" value="ELONGATION FACTOR TS"/>
    <property type="match status" value="1"/>
</dbReference>
<dbReference type="PANTHER" id="PTHR11741:SF0">
    <property type="entry name" value="ELONGATION FACTOR TS, MITOCHONDRIAL"/>
    <property type="match status" value="1"/>
</dbReference>
<dbReference type="Pfam" id="PF00889">
    <property type="entry name" value="EF_TS"/>
    <property type="match status" value="1"/>
</dbReference>
<dbReference type="SUPFAM" id="SSF54713">
    <property type="entry name" value="Elongation factor Ts (EF-Ts), dimerisation domain"/>
    <property type="match status" value="1"/>
</dbReference>
<dbReference type="SUPFAM" id="SSF46934">
    <property type="entry name" value="UBA-like"/>
    <property type="match status" value="1"/>
</dbReference>
<evidence type="ECO:0000255" key="1">
    <source>
        <dbReference type="HAMAP-Rule" id="MF_03135"/>
    </source>
</evidence>
<evidence type="ECO:0000305" key="2"/>